<organism>
    <name type="scientific">Burkholderia thailandensis (strain ATCC 700388 / DSM 13276 / CCUG 48851 / CIP 106301 / E264)</name>
    <dbReference type="NCBI Taxonomy" id="271848"/>
    <lineage>
        <taxon>Bacteria</taxon>
        <taxon>Pseudomonadati</taxon>
        <taxon>Pseudomonadota</taxon>
        <taxon>Betaproteobacteria</taxon>
        <taxon>Burkholderiales</taxon>
        <taxon>Burkholderiaceae</taxon>
        <taxon>Burkholderia</taxon>
        <taxon>pseudomallei group</taxon>
    </lineage>
</organism>
<feature type="chain" id="PRO_0000282737" description="Ribosomal RNA large subunit methyltransferase E">
    <location>
        <begin position="1"/>
        <end position="220"/>
    </location>
</feature>
<feature type="active site" description="Proton acceptor" evidence="1">
    <location>
        <position position="173"/>
    </location>
</feature>
<feature type="binding site" evidence="1">
    <location>
        <position position="60"/>
    </location>
    <ligand>
        <name>S-adenosyl-L-methionine</name>
        <dbReference type="ChEBI" id="CHEBI:59789"/>
    </ligand>
</feature>
<feature type="binding site" evidence="1">
    <location>
        <position position="62"/>
    </location>
    <ligand>
        <name>S-adenosyl-L-methionine</name>
        <dbReference type="ChEBI" id="CHEBI:59789"/>
    </ligand>
</feature>
<feature type="binding site" evidence="1">
    <location>
        <position position="92"/>
    </location>
    <ligand>
        <name>S-adenosyl-L-methionine</name>
        <dbReference type="ChEBI" id="CHEBI:59789"/>
    </ligand>
</feature>
<feature type="binding site" evidence="1">
    <location>
        <position position="108"/>
    </location>
    <ligand>
        <name>S-adenosyl-L-methionine</name>
        <dbReference type="ChEBI" id="CHEBI:59789"/>
    </ligand>
</feature>
<feature type="binding site" evidence="1">
    <location>
        <position position="133"/>
    </location>
    <ligand>
        <name>S-adenosyl-L-methionine</name>
        <dbReference type="ChEBI" id="CHEBI:59789"/>
    </ligand>
</feature>
<evidence type="ECO:0000255" key="1">
    <source>
        <dbReference type="HAMAP-Rule" id="MF_01547"/>
    </source>
</evidence>
<reference key="1">
    <citation type="journal article" date="2005" name="BMC Genomics">
        <title>Bacterial genome adaptation to niches: divergence of the potential virulence genes in three Burkholderia species of different survival strategies.</title>
        <authorList>
            <person name="Kim H.S."/>
            <person name="Schell M.A."/>
            <person name="Yu Y."/>
            <person name="Ulrich R.L."/>
            <person name="Sarria S.H."/>
            <person name="Nierman W.C."/>
            <person name="DeShazer D."/>
        </authorList>
    </citation>
    <scope>NUCLEOTIDE SEQUENCE [LARGE SCALE GENOMIC DNA]</scope>
    <source>
        <strain>ATCC 700388 / DSM 13276 / CCUG 48851 / CIP 106301 / E264</strain>
    </source>
</reference>
<protein>
    <recommendedName>
        <fullName evidence="1">Ribosomal RNA large subunit methyltransferase E</fullName>
        <ecNumber evidence="1">2.1.1.166</ecNumber>
    </recommendedName>
    <alternativeName>
        <fullName evidence="1">23S rRNA Um2552 methyltransferase</fullName>
    </alternativeName>
    <alternativeName>
        <fullName evidence="1">rRNA (uridine-2'-O-)-methyltransferase</fullName>
    </alternativeName>
</protein>
<proteinExistence type="inferred from homology"/>
<comment type="function">
    <text evidence="1">Specifically methylates the uridine in position 2552 of 23S rRNA at the 2'-O position of the ribose in the fully assembled 50S ribosomal subunit.</text>
</comment>
<comment type="catalytic activity">
    <reaction evidence="1">
        <text>uridine(2552) in 23S rRNA + S-adenosyl-L-methionine = 2'-O-methyluridine(2552) in 23S rRNA + S-adenosyl-L-homocysteine + H(+)</text>
        <dbReference type="Rhea" id="RHEA:42720"/>
        <dbReference type="Rhea" id="RHEA-COMP:10202"/>
        <dbReference type="Rhea" id="RHEA-COMP:10203"/>
        <dbReference type="ChEBI" id="CHEBI:15378"/>
        <dbReference type="ChEBI" id="CHEBI:57856"/>
        <dbReference type="ChEBI" id="CHEBI:59789"/>
        <dbReference type="ChEBI" id="CHEBI:65315"/>
        <dbReference type="ChEBI" id="CHEBI:74478"/>
        <dbReference type="EC" id="2.1.1.166"/>
    </reaction>
</comment>
<comment type="subcellular location">
    <subcellularLocation>
        <location evidence="1">Cytoplasm</location>
    </subcellularLocation>
</comment>
<comment type="similarity">
    <text evidence="1">Belongs to the class I-like SAM-binding methyltransferase superfamily. RNA methyltransferase RlmE family.</text>
</comment>
<name>RLME_BURTA</name>
<dbReference type="EC" id="2.1.1.166" evidence="1"/>
<dbReference type="EMBL" id="CP000086">
    <property type="protein sequence ID" value="ABC36554.1"/>
    <property type="molecule type" value="Genomic_DNA"/>
</dbReference>
<dbReference type="RefSeq" id="WP_009891909.1">
    <property type="nucleotide sequence ID" value="NZ_CP008785.1"/>
</dbReference>
<dbReference type="SMR" id="Q2SUW0"/>
<dbReference type="GeneID" id="45122474"/>
<dbReference type="KEGG" id="bte:BTH_I2777"/>
<dbReference type="HOGENOM" id="CLU_009422_4_1_4"/>
<dbReference type="Proteomes" id="UP000001930">
    <property type="component" value="Chromosome I"/>
</dbReference>
<dbReference type="GO" id="GO:0005737">
    <property type="term" value="C:cytoplasm"/>
    <property type="evidence" value="ECO:0007669"/>
    <property type="project" value="UniProtKB-SubCell"/>
</dbReference>
<dbReference type="GO" id="GO:0008650">
    <property type="term" value="F:rRNA (uridine-2'-O-)-methyltransferase activity"/>
    <property type="evidence" value="ECO:0007669"/>
    <property type="project" value="UniProtKB-UniRule"/>
</dbReference>
<dbReference type="FunFam" id="3.40.50.150:FF:000005">
    <property type="entry name" value="Ribosomal RNA large subunit methyltransferase E"/>
    <property type="match status" value="1"/>
</dbReference>
<dbReference type="Gene3D" id="3.40.50.150">
    <property type="entry name" value="Vaccinia Virus protein VP39"/>
    <property type="match status" value="1"/>
</dbReference>
<dbReference type="HAMAP" id="MF_01547">
    <property type="entry name" value="RNA_methyltr_E"/>
    <property type="match status" value="1"/>
</dbReference>
<dbReference type="InterPro" id="IPR050082">
    <property type="entry name" value="RNA_methyltr_RlmE"/>
</dbReference>
<dbReference type="InterPro" id="IPR002877">
    <property type="entry name" value="RNA_MeTrfase_FtsJ_dom"/>
</dbReference>
<dbReference type="InterPro" id="IPR015507">
    <property type="entry name" value="rRNA-MeTfrase_E"/>
</dbReference>
<dbReference type="InterPro" id="IPR029063">
    <property type="entry name" value="SAM-dependent_MTases_sf"/>
</dbReference>
<dbReference type="PANTHER" id="PTHR10920">
    <property type="entry name" value="RIBOSOMAL RNA METHYLTRANSFERASE"/>
    <property type="match status" value="1"/>
</dbReference>
<dbReference type="PANTHER" id="PTHR10920:SF18">
    <property type="entry name" value="RRNA METHYLTRANSFERASE 2, MITOCHONDRIAL"/>
    <property type="match status" value="1"/>
</dbReference>
<dbReference type="Pfam" id="PF01728">
    <property type="entry name" value="FtsJ"/>
    <property type="match status" value="1"/>
</dbReference>
<dbReference type="PIRSF" id="PIRSF005461">
    <property type="entry name" value="23S_rRNA_mtase"/>
    <property type="match status" value="1"/>
</dbReference>
<dbReference type="SUPFAM" id="SSF53335">
    <property type="entry name" value="S-adenosyl-L-methionine-dependent methyltransferases"/>
    <property type="match status" value="1"/>
</dbReference>
<gene>
    <name evidence="1" type="primary">rlmE</name>
    <name evidence="1" type="synonym">ftsJ</name>
    <name evidence="1" type="synonym">rrmJ</name>
    <name type="ordered locus">BTH_I2777</name>
</gene>
<keyword id="KW-0963">Cytoplasm</keyword>
<keyword id="KW-0489">Methyltransferase</keyword>
<keyword id="KW-0698">rRNA processing</keyword>
<keyword id="KW-0949">S-adenosyl-L-methionine</keyword>
<keyword id="KW-0808">Transferase</keyword>
<accession>Q2SUW0</accession>
<sequence length="220" mass="24717">MAKNRFNQSWLHDHINDPYVKMAQREGYRARAAYKLKEIDEQDKLIRPGQVIVDLGAAPGSWSQYARNKLAQGRRRDAVREGGIDGTIIALDMLPMEPIADVHFIQGDFREETVLHQLEEVLAGRSVDLVISDMAPNLSGVAVADAARIEHVCDLALEFAQNHLKPDGALLVKCFHGSGYSQIVEKFKHQFKTVAPRKPKASRDKSSETFILGRHLKLPR</sequence>